<keyword id="KW-0002">3D-structure</keyword>
<keyword id="KW-0051">Antiviral defense</keyword>
<keyword id="KW-0202">Cytokine</keyword>
<keyword id="KW-1015">Disulfide bond</keyword>
<keyword id="KW-0391">Immunity</keyword>
<keyword id="KW-0395">Inflammatory response</keyword>
<keyword id="KW-0399">Innate immunity</keyword>
<keyword id="KW-1267">Proteomics identification</keyword>
<keyword id="KW-1185">Reference proteome</keyword>
<keyword id="KW-0964">Secreted</keyword>
<keyword id="KW-0732">Signal</keyword>
<keyword id="KW-0797">Tissue remodeling</keyword>
<protein>
    <recommendedName>
        <fullName>Interleukin-23 subunit alpha</fullName>
        <shortName>IL-23 subunit alpha</shortName>
        <shortName>IL-23-A</shortName>
    </recommendedName>
    <alternativeName>
        <fullName>Interleukin-23 subunit p19</fullName>
        <shortName>IL-23p19</shortName>
    </alternativeName>
</protein>
<gene>
    <name type="primary">IL23A</name>
    <name type="synonym">SGRF</name>
    <name type="ORF">UNQ2498/PRO5798</name>
</gene>
<evidence type="ECO:0000255" key="1"/>
<evidence type="ECO:0000269" key="2">
    <source>
    </source>
</evidence>
<evidence type="ECO:0000269" key="3">
    <source>
    </source>
</evidence>
<evidence type="ECO:0000269" key="4">
    <source>
    </source>
</evidence>
<evidence type="ECO:0000269" key="5">
    <source>
    </source>
</evidence>
<evidence type="ECO:0000269" key="6">
    <source>
    </source>
</evidence>
<evidence type="ECO:0000269" key="7">
    <source>
    </source>
</evidence>
<evidence type="ECO:0000269" key="8">
    <source>
    </source>
</evidence>
<evidence type="ECO:0000269" key="9">
    <source>
    </source>
</evidence>
<evidence type="ECO:0000269" key="10">
    <source>
    </source>
</evidence>
<evidence type="ECO:0000269" key="11">
    <source>
    </source>
</evidence>
<evidence type="ECO:0000269" key="12">
    <source>
    </source>
</evidence>
<evidence type="ECO:0000269" key="13">
    <source>
    </source>
</evidence>
<evidence type="ECO:0000269" key="14">
    <source>
    </source>
</evidence>
<evidence type="ECO:0000269" key="15">
    <source>
    </source>
</evidence>
<evidence type="ECO:0000269" key="16">
    <source>
    </source>
</evidence>
<evidence type="ECO:0000269" key="17">
    <source>
    </source>
</evidence>
<evidence type="ECO:0000305" key="18"/>
<evidence type="ECO:0007744" key="19">
    <source>
        <dbReference type="PDB" id="5MXA"/>
    </source>
</evidence>
<evidence type="ECO:0007744" key="20">
    <source>
        <dbReference type="PDB" id="5MZV"/>
    </source>
</evidence>
<evidence type="ECO:0007744" key="21">
    <source>
        <dbReference type="PDB" id="5NJD"/>
    </source>
</evidence>
<evidence type="ECO:0007744" key="22">
    <source>
        <dbReference type="PDB" id="6UIB"/>
    </source>
</evidence>
<evidence type="ECO:0007744" key="23">
    <source>
        <dbReference type="PDB" id="6WDQ"/>
    </source>
</evidence>
<evidence type="ECO:0007829" key="24">
    <source>
        <dbReference type="PDB" id="3D85"/>
    </source>
</evidence>
<evidence type="ECO:0007829" key="25">
    <source>
        <dbReference type="PDB" id="3D87"/>
    </source>
</evidence>
<evidence type="ECO:0007829" key="26">
    <source>
        <dbReference type="PDB" id="5MJ3"/>
    </source>
</evidence>
<evidence type="ECO:0007829" key="27">
    <source>
        <dbReference type="PDB" id="5MJ4"/>
    </source>
</evidence>
<evidence type="ECO:0007829" key="28">
    <source>
        <dbReference type="PDB" id="6WDQ"/>
    </source>
</evidence>
<proteinExistence type="evidence at protein level"/>
<accession>Q9NPF7</accession>
<accession>Q6NZ80</accession>
<accession>Q6NZ82</accession>
<accession>Q9H2A5</accession>
<name>IL23A_HUMAN</name>
<sequence length="189" mass="20730">MLGSRAVMLLLLLPWTAQGRAVPGGSSPAWTQCQQLSQKLCTLAWSAHPLVGHMDLREEGDEETTNDVPHIQCGDGCDPQGLRDNSQFCLQRIHQGLIFYEKLLGSDIFTGEPSLLPDSPVGQLHASLLGLSQLLQPEGHHWETQQIPSLSPSQPWQRLLLRFKILRSLQAFVAVAARVFAHGAATLSP</sequence>
<organism>
    <name type="scientific">Homo sapiens</name>
    <name type="common">Human</name>
    <dbReference type="NCBI Taxonomy" id="9606"/>
    <lineage>
        <taxon>Eukaryota</taxon>
        <taxon>Metazoa</taxon>
        <taxon>Chordata</taxon>
        <taxon>Craniata</taxon>
        <taxon>Vertebrata</taxon>
        <taxon>Euteleostomi</taxon>
        <taxon>Mammalia</taxon>
        <taxon>Eutheria</taxon>
        <taxon>Euarchontoglires</taxon>
        <taxon>Primates</taxon>
        <taxon>Haplorrhini</taxon>
        <taxon>Catarrhini</taxon>
        <taxon>Hominidae</taxon>
        <taxon>Homo</taxon>
    </lineage>
</organism>
<dbReference type="EMBL" id="AF301620">
    <property type="protein sequence ID" value="AAG37232.1"/>
    <property type="molecule type" value="mRNA"/>
</dbReference>
<dbReference type="EMBL" id="AB030000">
    <property type="protein sequence ID" value="BAA93686.1"/>
    <property type="molecule type" value="mRNA"/>
</dbReference>
<dbReference type="EMBL" id="AB030001">
    <property type="protein sequence ID" value="BAA93687.1"/>
    <property type="molecule type" value="Genomic_DNA"/>
</dbReference>
<dbReference type="EMBL" id="AY359083">
    <property type="protein sequence ID" value="AAQ89442.1"/>
    <property type="molecule type" value="mRNA"/>
</dbReference>
<dbReference type="EMBL" id="BC066267">
    <property type="protein sequence ID" value="AAH66267.1"/>
    <property type="molecule type" value="mRNA"/>
</dbReference>
<dbReference type="EMBL" id="BC066268">
    <property type="protein sequence ID" value="AAH66268.1"/>
    <property type="molecule type" value="mRNA"/>
</dbReference>
<dbReference type="EMBL" id="BC066269">
    <property type="protein sequence ID" value="AAH66269.1"/>
    <property type="molecule type" value="mRNA"/>
</dbReference>
<dbReference type="EMBL" id="BC067511">
    <property type="protein sequence ID" value="AAH67511.1"/>
    <property type="molecule type" value="mRNA"/>
</dbReference>
<dbReference type="EMBL" id="BC067512">
    <property type="protein sequence ID" value="AAH67512.1"/>
    <property type="molecule type" value="mRNA"/>
</dbReference>
<dbReference type="EMBL" id="BC067513">
    <property type="protein sequence ID" value="AAH67513.1"/>
    <property type="molecule type" value="mRNA"/>
</dbReference>
<dbReference type="CCDS" id="CCDS8916.1"/>
<dbReference type="RefSeq" id="NP_057668.1">
    <property type="nucleotide sequence ID" value="NM_016584.3"/>
</dbReference>
<dbReference type="RefSeq" id="XP_011536779.1">
    <property type="nucleotide sequence ID" value="XM_011538477.2"/>
</dbReference>
<dbReference type="PDB" id="3D85">
    <property type="method" value="X-ray"/>
    <property type="resolution" value="1.90 A"/>
    <property type="chains" value="C=20-189"/>
</dbReference>
<dbReference type="PDB" id="3D87">
    <property type="method" value="X-ray"/>
    <property type="resolution" value="2.90 A"/>
    <property type="chains" value="A/C=20-189"/>
</dbReference>
<dbReference type="PDB" id="3DUH">
    <property type="method" value="X-ray"/>
    <property type="resolution" value="2.30 A"/>
    <property type="chains" value="C/D=20-189"/>
</dbReference>
<dbReference type="PDB" id="3QWR">
    <property type="method" value="X-ray"/>
    <property type="resolution" value="3.25 A"/>
    <property type="chains" value="B=20-189"/>
</dbReference>
<dbReference type="PDB" id="4GRW">
    <property type="method" value="X-ray"/>
    <property type="resolution" value="2.55 A"/>
    <property type="chains" value="A/C=1-189"/>
</dbReference>
<dbReference type="PDB" id="5MJ3">
    <property type="method" value="X-ray"/>
    <property type="resolution" value="1.74 A"/>
    <property type="chains" value="B=20-189"/>
</dbReference>
<dbReference type="PDB" id="5MJ4">
    <property type="method" value="X-ray"/>
    <property type="resolution" value="3.40 A"/>
    <property type="chains" value="B=20-189"/>
</dbReference>
<dbReference type="PDB" id="5MXA">
    <property type="method" value="X-ray"/>
    <property type="resolution" value="2.50 A"/>
    <property type="chains" value="B=1-189"/>
</dbReference>
<dbReference type="PDB" id="5MZV">
    <property type="method" value="X-ray"/>
    <property type="resolution" value="2.80 A"/>
    <property type="chains" value="B=1-189"/>
</dbReference>
<dbReference type="PDB" id="5NJD">
    <property type="method" value="X-ray"/>
    <property type="resolution" value="3.90 A"/>
    <property type="chains" value="B/D/F/H/J/L=1-189"/>
</dbReference>
<dbReference type="PDB" id="6UIB">
    <property type="method" value="X-ray"/>
    <property type="resolution" value="2.74 A"/>
    <property type="chains" value="A=20-189"/>
</dbReference>
<dbReference type="PDB" id="6WDQ">
    <property type="method" value="X-ray"/>
    <property type="resolution" value="3.40 A"/>
    <property type="chains" value="B=28-189"/>
</dbReference>
<dbReference type="PDB" id="8CR8">
    <property type="method" value="X-ray"/>
    <property type="resolution" value="2.00 A"/>
    <property type="chains" value="B=22-189"/>
</dbReference>
<dbReference type="PDB" id="8OE4">
    <property type="method" value="EM"/>
    <property type="resolution" value="3.60 A"/>
    <property type="chains" value="B=20-189"/>
</dbReference>
<dbReference type="PDBsum" id="3D85"/>
<dbReference type="PDBsum" id="3D87"/>
<dbReference type="PDBsum" id="3DUH"/>
<dbReference type="PDBsum" id="3QWR"/>
<dbReference type="PDBsum" id="4GRW"/>
<dbReference type="PDBsum" id="5MJ3"/>
<dbReference type="PDBsum" id="5MJ4"/>
<dbReference type="PDBsum" id="5MXA"/>
<dbReference type="PDBsum" id="5MZV"/>
<dbReference type="PDBsum" id="5NJD"/>
<dbReference type="PDBsum" id="6UIB"/>
<dbReference type="PDBsum" id="6WDQ"/>
<dbReference type="PDBsum" id="8CR8"/>
<dbReference type="PDBsum" id="8OE4"/>
<dbReference type="EMDB" id="EMD-16824"/>
<dbReference type="EMDB" id="EMD-21646"/>
<dbReference type="SMR" id="Q9NPF7"/>
<dbReference type="BioGRID" id="119611">
    <property type="interactions" value="9"/>
</dbReference>
<dbReference type="ComplexPortal" id="CPX-3290">
    <property type="entry name" value="Interleukin-23 complex"/>
</dbReference>
<dbReference type="ComplexPortal" id="CPX-383">
    <property type="entry name" value="Interleukin-23 receptor-ligand complex"/>
</dbReference>
<dbReference type="CORUM" id="Q9NPF7"/>
<dbReference type="FunCoup" id="Q9NPF7">
    <property type="interactions" value="480"/>
</dbReference>
<dbReference type="IntAct" id="Q9NPF7">
    <property type="interactions" value="6"/>
</dbReference>
<dbReference type="STRING" id="9606.ENSP00000228534"/>
<dbReference type="ChEMBL" id="CHEMBL2364154"/>
<dbReference type="DrugBank" id="DB05459">
    <property type="generic name" value="Briakinumab"/>
</dbReference>
<dbReference type="DrugBank" id="DB11834">
    <property type="generic name" value="Guselkumab"/>
</dbReference>
<dbReference type="DrugBank" id="DB14910">
    <property type="generic name" value="Mirikizumab"/>
</dbReference>
<dbReference type="DrugBank" id="DB14762">
    <property type="generic name" value="Risankizumab"/>
</dbReference>
<dbReference type="DrugBank" id="DB14004">
    <property type="generic name" value="Tildrakizumab"/>
</dbReference>
<dbReference type="DrugBank" id="DB05679">
    <property type="generic name" value="Ustekinumab"/>
</dbReference>
<dbReference type="DrugCentral" id="Q9NPF7"/>
<dbReference type="iPTMnet" id="Q9NPF7"/>
<dbReference type="BioMuta" id="IL23A"/>
<dbReference type="DMDM" id="74761641"/>
<dbReference type="MassIVE" id="Q9NPF7"/>
<dbReference type="PaxDb" id="9606-ENSP00000228534"/>
<dbReference type="PeptideAtlas" id="Q9NPF7"/>
<dbReference type="ABCD" id="Q9NPF7">
    <property type="antibodies" value="23 sequenced antibodies"/>
</dbReference>
<dbReference type="Antibodypedia" id="803">
    <property type="antibodies" value="880 antibodies from 42 providers"/>
</dbReference>
<dbReference type="DNASU" id="51561"/>
<dbReference type="Ensembl" id="ENST00000228534.6">
    <property type="protein sequence ID" value="ENSP00000228534.4"/>
    <property type="gene ID" value="ENSG00000110944.9"/>
</dbReference>
<dbReference type="GeneID" id="51561"/>
<dbReference type="KEGG" id="hsa:51561"/>
<dbReference type="MANE-Select" id="ENST00000228534.6">
    <property type="protein sequence ID" value="ENSP00000228534.4"/>
    <property type="RefSeq nucleotide sequence ID" value="NM_016584.3"/>
    <property type="RefSeq protein sequence ID" value="NP_057668.1"/>
</dbReference>
<dbReference type="UCSC" id="uc001sla.4">
    <property type="organism name" value="human"/>
</dbReference>
<dbReference type="AGR" id="HGNC:15488"/>
<dbReference type="CTD" id="51561"/>
<dbReference type="DisGeNET" id="51561"/>
<dbReference type="GeneCards" id="IL23A"/>
<dbReference type="HGNC" id="HGNC:15488">
    <property type="gene designation" value="IL23A"/>
</dbReference>
<dbReference type="HPA" id="ENSG00000110944">
    <property type="expression patterns" value="Tissue enriched (urinary)"/>
</dbReference>
<dbReference type="MIM" id="605580">
    <property type="type" value="gene"/>
</dbReference>
<dbReference type="neXtProt" id="NX_Q9NPF7"/>
<dbReference type="OpenTargets" id="ENSG00000110944"/>
<dbReference type="PharmGKB" id="PA29824"/>
<dbReference type="VEuPathDB" id="HostDB:ENSG00000110944"/>
<dbReference type="eggNOG" id="ENOG502STAQ">
    <property type="taxonomic scope" value="Eukaryota"/>
</dbReference>
<dbReference type="GeneTree" id="ENSGT00390000006482"/>
<dbReference type="HOGENOM" id="CLU_122915_0_0_1"/>
<dbReference type="InParanoid" id="Q9NPF7"/>
<dbReference type="OMA" id="IRCSDAC"/>
<dbReference type="OrthoDB" id="9447007at2759"/>
<dbReference type="PAN-GO" id="Q9NPF7">
    <property type="GO annotations" value="4 GO annotations based on evolutionary models"/>
</dbReference>
<dbReference type="PhylomeDB" id="Q9NPF7"/>
<dbReference type="TreeFam" id="TF337234"/>
<dbReference type="PathwayCommons" id="Q9NPF7"/>
<dbReference type="Reactome" id="R-HSA-6785807">
    <property type="pathway name" value="Interleukin-4 and Interleukin-13 signaling"/>
</dbReference>
<dbReference type="Reactome" id="R-HSA-9020933">
    <property type="pathway name" value="Interleukin-23 signaling"/>
</dbReference>
<dbReference type="SignaLink" id="Q9NPF7"/>
<dbReference type="SIGNOR" id="Q9NPF7"/>
<dbReference type="BioGRID-ORCS" id="51561">
    <property type="hits" value="12 hits in 1094 CRISPR screens"/>
</dbReference>
<dbReference type="EvolutionaryTrace" id="Q9NPF7"/>
<dbReference type="GeneWiki" id="Interleukin_23"/>
<dbReference type="GenomeRNAi" id="51561"/>
<dbReference type="Pharos" id="Q9NPF7">
    <property type="development level" value="Tclin"/>
</dbReference>
<dbReference type="PRO" id="PR:Q9NPF7"/>
<dbReference type="Proteomes" id="UP000005640">
    <property type="component" value="Chromosome 12"/>
</dbReference>
<dbReference type="RNAct" id="Q9NPF7">
    <property type="molecule type" value="protein"/>
</dbReference>
<dbReference type="Bgee" id="ENSG00000110944">
    <property type="expression patterns" value="Expressed in male germ line stem cell (sensu Vertebrata) in testis and 111 other cell types or tissues"/>
</dbReference>
<dbReference type="GO" id="GO:0005788">
    <property type="term" value="C:endoplasmic reticulum lumen"/>
    <property type="evidence" value="ECO:0000304"/>
    <property type="project" value="Reactome"/>
</dbReference>
<dbReference type="GO" id="GO:0005576">
    <property type="term" value="C:extracellular region"/>
    <property type="evidence" value="ECO:0000304"/>
    <property type="project" value="Reactome"/>
</dbReference>
<dbReference type="GO" id="GO:0070743">
    <property type="term" value="C:interleukin-23 complex"/>
    <property type="evidence" value="ECO:0000314"/>
    <property type="project" value="BHF-UCL"/>
</dbReference>
<dbReference type="GO" id="GO:0005125">
    <property type="term" value="F:cytokine activity"/>
    <property type="evidence" value="ECO:0007669"/>
    <property type="project" value="UniProtKB-KW"/>
</dbReference>
<dbReference type="GO" id="GO:0045519">
    <property type="term" value="F:interleukin-23 receptor binding"/>
    <property type="evidence" value="ECO:0007669"/>
    <property type="project" value="Ensembl"/>
</dbReference>
<dbReference type="GO" id="GO:0007259">
    <property type="term" value="P:cell surface receptor signaling pathway via JAK-STAT"/>
    <property type="evidence" value="ECO:0000314"/>
    <property type="project" value="BHF-UCL"/>
</dbReference>
<dbReference type="GO" id="GO:0097696">
    <property type="term" value="P:cell surface receptor signaling pathway via STAT"/>
    <property type="evidence" value="ECO:0000314"/>
    <property type="project" value="BHF-UCL"/>
</dbReference>
<dbReference type="GO" id="GO:0050829">
    <property type="term" value="P:defense response to Gram-negative bacterium"/>
    <property type="evidence" value="ECO:0000314"/>
    <property type="project" value="BHF-UCL"/>
</dbReference>
<dbReference type="GO" id="GO:0051607">
    <property type="term" value="P:defense response to virus"/>
    <property type="evidence" value="ECO:0007669"/>
    <property type="project" value="UniProtKB-KW"/>
</dbReference>
<dbReference type="GO" id="GO:0006954">
    <property type="term" value="P:inflammatory response"/>
    <property type="evidence" value="ECO:0007669"/>
    <property type="project" value="UniProtKB-KW"/>
</dbReference>
<dbReference type="GO" id="GO:0045087">
    <property type="term" value="P:innate immune response"/>
    <property type="evidence" value="ECO:0007669"/>
    <property type="project" value="UniProtKB-KW"/>
</dbReference>
<dbReference type="GO" id="GO:0032693">
    <property type="term" value="P:negative regulation of interleukin-10 production"/>
    <property type="evidence" value="ECO:0000315"/>
    <property type="project" value="BHF-UCL"/>
</dbReference>
<dbReference type="GO" id="GO:0042104">
    <property type="term" value="P:positive regulation of activated T cell proliferation"/>
    <property type="evidence" value="ECO:0000314"/>
    <property type="project" value="BHF-UCL"/>
</dbReference>
<dbReference type="GO" id="GO:0002230">
    <property type="term" value="P:positive regulation of defense response to virus by host"/>
    <property type="evidence" value="ECO:0000314"/>
    <property type="project" value="BHF-UCL"/>
</dbReference>
<dbReference type="GO" id="GO:0032725">
    <property type="term" value="P:positive regulation of granulocyte macrophage colony-stimulating factor production"/>
    <property type="evidence" value="ECO:0000314"/>
    <property type="project" value="BHF-UCL"/>
</dbReference>
<dbReference type="GO" id="GO:0050729">
    <property type="term" value="P:positive regulation of inflammatory response"/>
    <property type="evidence" value="ECO:0000305"/>
    <property type="project" value="BHF-UCL"/>
</dbReference>
<dbReference type="GO" id="GO:0032733">
    <property type="term" value="P:positive regulation of interleukin-10 production"/>
    <property type="evidence" value="ECO:0000314"/>
    <property type="project" value="BHF-UCL"/>
</dbReference>
<dbReference type="GO" id="GO:0032735">
    <property type="term" value="P:positive regulation of interleukin-12 production"/>
    <property type="evidence" value="ECO:0000314"/>
    <property type="project" value="BHF-UCL"/>
</dbReference>
<dbReference type="GO" id="GO:0032740">
    <property type="term" value="P:positive regulation of interleukin-17 production"/>
    <property type="evidence" value="ECO:0000314"/>
    <property type="project" value="BHF-UCL"/>
</dbReference>
<dbReference type="GO" id="GO:0043382">
    <property type="term" value="P:positive regulation of memory T cell differentiation"/>
    <property type="evidence" value="ECO:0000250"/>
    <property type="project" value="BHF-UCL"/>
</dbReference>
<dbReference type="GO" id="GO:0032816">
    <property type="term" value="P:positive regulation of natural killer cell activation"/>
    <property type="evidence" value="ECO:0000305"/>
    <property type="project" value="BHF-UCL"/>
</dbReference>
<dbReference type="GO" id="GO:0032819">
    <property type="term" value="P:positive regulation of natural killer cell proliferation"/>
    <property type="evidence" value="ECO:0000314"/>
    <property type="project" value="BHF-UCL"/>
</dbReference>
<dbReference type="GO" id="GO:0090023">
    <property type="term" value="P:positive regulation of neutrophil chemotaxis"/>
    <property type="evidence" value="ECO:0007669"/>
    <property type="project" value="Ensembl"/>
</dbReference>
<dbReference type="GO" id="GO:0051135">
    <property type="term" value="P:positive regulation of NK T cell activation"/>
    <property type="evidence" value="ECO:0000314"/>
    <property type="project" value="BHF-UCL"/>
</dbReference>
<dbReference type="GO" id="GO:0051142">
    <property type="term" value="P:positive regulation of NK T cell proliferation"/>
    <property type="evidence" value="ECO:0000314"/>
    <property type="project" value="BHF-UCL"/>
</dbReference>
<dbReference type="GO" id="GO:1901224">
    <property type="term" value="P:positive regulation of non-canonical NF-kappaB signal transduction"/>
    <property type="evidence" value="ECO:0000304"/>
    <property type="project" value="BHF-UCL"/>
</dbReference>
<dbReference type="GO" id="GO:0045672">
    <property type="term" value="P:positive regulation of osteoclast differentiation"/>
    <property type="evidence" value="ECO:0000314"/>
    <property type="project" value="BHF-UCL"/>
</dbReference>
<dbReference type="GO" id="GO:0001916">
    <property type="term" value="P:positive regulation of T cell mediated cytotoxicity"/>
    <property type="evidence" value="ECO:0000250"/>
    <property type="project" value="BHF-UCL"/>
</dbReference>
<dbReference type="GO" id="GO:0042102">
    <property type="term" value="P:positive regulation of T cell proliferation"/>
    <property type="evidence" value="ECO:0000314"/>
    <property type="project" value="BHF-UCL"/>
</dbReference>
<dbReference type="GO" id="GO:0002827">
    <property type="term" value="P:positive regulation of T-helper 1 type immune response"/>
    <property type="evidence" value="ECO:0000314"/>
    <property type="project" value="BHF-UCL"/>
</dbReference>
<dbReference type="GO" id="GO:2000330">
    <property type="term" value="P:positive regulation of T-helper 17 cell lineage commitment"/>
    <property type="evidence" value="ECO:0000250"/>
    <property type="project" value="BHF-UCL"/>
</dbReference>
<dbReference type="GO" id="GO:2000318">
    <property type="term" value="P:positive regulation of T-helper 17 type immune response"/>
    <property type="evidence" value="ECO:0000250"/>
    <property type="project" value="BHF-UCL"/>
</dbReference>
<dbReference type="GO" id="GO:0034105">
    <property type="term" value="P:positive regulation of tissue remodeling"/>
    <property type="evidence" value="ECO:0000305"/>
    <property type="project" value="BHF-UCL"/>
</dbReference>
<dbReference type="GO" id="GO:0045944">
    <property type="term" value="P:positive regulation of transcription by RNA polymerase II"/>
    <property type="evidence" value="ECO:0007669"/>
    <property type="project" value="Ensembl"/>
</dbReference>
<dbReference type="GO" id="GO:0032760">
    <property type="term" value="P:positive regulation of tumor necrosis factor production"/>
    <property type="evidence" value="ECO:0000315"/>
    <property type="project" value="BHF-UCL"/>
</dbReference>
<dbReference type="GO" id="GO:0032729">
    <property type="term" value="P:positive regulation of type II interferon production"/>
    <property type="evidence" value="ECO:0000314"/>
    <property type="project" value="BHF-UCL"/>
</dbReference>
<dbReference type="GO" id="GO:0042098">
    <property type="term" value="P:T cell proliferation"/>
    <property type="evidence" value="ECO:0007669"/>
    <property type="project" value="Ensembl"/>
</dbReference>
<dbReference type="GO" id="GO:0048771">
    <property type="term" value="P:tissue remodeling"/>
    <property type="evidence" value="ECO:0007669"/>
    <property type="project" value="UniProtKB-KW"/>
</dbReference>
<dbReference type="FunFam" id="1.20.1250.10:FF:000024">
    <property type="entry name" value="Interleukin-23 subunit alpha"/>
    <property type="match status" value="1"/>
</dbReference>
<dbReference type="Gene3D" id="1.20.1250.10">
    <property type="match status" value="1"/>
</dbReference>
<dbReference type="InterPro" id="IPR009079">
    <property type="entry name" value="4_helix_cytokine-like_core"/>
</dbReference>
<dbReference type="InterPro" id="IPR010831">
    <property type="entry name" value="IL-23_alpha"/>
</dbReference>
<dbReference type="PANTHER" id="PTHR15947:SF0">
    <property type="entry name" value="INTERLEUKIN-23 SUBUNIT ALPHA"/>
    <property type="match status" value="1"/>
</dbReference>
<dbReference type="PANTHER" id="PTHR15947">
    <property type="entry name" value="SGRF"/>
    <property type="match status" value="1"/>
</dbReference>
<dbReference type="Pfam" id="PF16649">
    <property type="entry name" value="IL23"/>
    <property type="match status" value="1"/>
</dbReference>
<dbReference type="SUPFAM" id="SSF47266">
    <property type="entry name" value="4-helical cytokines"/>
    <property type="match status" value="1"/>
</dbReference>
<comment type="function">
    <text evidence="2 3 9 12 14 15 17">Associates with IL12B to form the pro-inflammatory cytokine IL-23 that plays different roles in innate and adaptive immunity (PubMed:11114383). Released by antigen-presenting cells such as dendritic cells or macrophages, binds to a heterodimeric receptor complex composed of IL12RB1 and IL23R to activate JAK2 and TYK2 which then phosphorylate the receptor to form a docking site leading to the phosphorylation of STAT3 and STAT4 (PubMed:29287995, PubMed:32474165, PubMed:33606986). This process leads to activation of several pathways including p38 MAPK or NF-kappa-B and promotes the production of pro-inflammatory cytokines such as interleukin-17A/IL17A (PubMed:12023369). In turn, participates in the early and effective intracellular bacterial clearance (PubMed:32474165). Promotes the expansion and survival of T-helper 17 cells, a CD4-positive helper T-cell subset that produces IL-17, as well as other IL-17-producing cells (PubMed:17676044).</text>
</comment>
<comment type="subunit">
    <text evidence="2 13 14 17">Heterodimer with IL12B; disulfide-linked (PubMed:11114383, PubMed:18680750). The heterodimer is known as interleukin IL-23 (PubMed:11114383, PubMed:18680750). Interacts with IL23R; this interaction enables recruitment of IL12RB1 (PubMed:29287995, PubMed:33606986).</text>
</comment>
<comment type="interaction">
    <interactant intactId="EBI-2481154">
        <id>Q9NPF7</id>
    </interactant>
    <interactant intactId="EBI-1029614">
        <id>P29460</id>
        <label>IL12B</label>
    </interactant>
    <organismsDiffer>false</organismsDiffer>
    <experiments>6</experiments>
</comment>
<comment type="interaction">
    <interactant intactId="EBI-2481154">
        <id>Q9NPF7</id>
    </interactant>
    <interactant intactId="EBI-10248005">
        <id>Q5VWK5</id>
        <label>IL23R</label>
    </interactant>
    <organismsDiffer>false</organismsDiffer>
    <experiments>2</experiments>
</comment>
<comment type="interaction">
    <interactant intactId="EBI-2481154">
        <id>Q9NPF7</id>
    </interactant>
    <interactant intactId="EBI-594747">
        <id>P40855</id>
        <label>PEX19</label>
    </interactant>
    <organismsDiffer>false</organismsDiffer>
    <experiments>6</experiments>
</comment>
<comment type="subcellular location">
    <subcellularLocation>
        <location evidence="2">Secreted</location>
    </subcellularLocation>
    <text>Secreted upon association with IL12B.</text>
</comment>
<comment type="tissue specificity">
    <text evidence="2 9">Secreted by activated dendritic and phagocytic cells and keratinocytes. Also expressed by dermal Langerhans cells (at protein level).</text>
</comment>
<comment type="developmental stage">
    <text evidence="8">Expressed by newborns dendritic cells.</text>
</comment>
<comment type="induction">
    <text evidence="4 5 6 7 9 10 11">Up-regulated by a wide array of pathogens and pathogen-products together with self-signals for danger or injury. Up-regulated in psoriatic dermal tissues, in dendritic cells of multiple sclerosis patients and in tumors.</text>
</comment>
<comment type="similarity">
    <text evidence="18">Belongs to the IL-6 superfamily.</text>
</comment>
<comment type="online information" name="Atlas of Genetics and Cytogenetics in Oncology and Haematology">
    <link uri="https://atlasgeneticsoncology.org/gene/44517/IL23A"/>
</comment>
<feature type="signal peptide" evidence="1">
    <location>
        <begin position="1"/>
        <end position="19"/>
    </location>
</feature>
<feature type="chain" id="PRO_0000259488" description="Interleukin-23 subunit alpha">
    <location>
        <begin position="20"/>
        <end position="189"/>
    </location>
</feature>
<feature type="disulfide bond" description="Interchain (with C-119 in IL12A)" evidence="14 16">
    <location>
        <position position="73"/>
    </location>
</feature>
<feature type="disulfide bond" evidence="14 16 17">
    <location>
        <begin position="77"/>
        <end position="89"/>
    </location>
</feature>
<feature type="sequence conflict" description="In Ref. 1; AAG37232." evidence="18" ref="1">
    <original>G</original>
    <variation>A</variation>
    <location>
        <position position="122"/>
    </location>
</feature>
<feature type="sequence conflict" description="In Ref. 4; AAH66267." evidence="18" ref="4">
    <original>I</original>
    <variation>M</variation>
    <location>
        <position position="147"/>
    </location>
</feature>
<feature type="sequence conflict" description="In Ref. 4; AAH66267." evidence="18" ref="4">
    <original>S</original>
    <variation>N</variation>
    <location>
        <position position="168"/>
    </location>
</feature>
<feature type="sequence conflict" description="In Ref. 4; AAH66269." evidence="18" ref="4">
    <original>V</original>
    <variation>A</variation>
    <location>
        <position position="173"/>
    </location>
</feature>
<feature type="sequence conflict" description="In Ref. 4; AAH66269." evidence="18" ref="4">
    <original>P</original>
    <variation>L</variation>
    <location>
        <position position="189"/>
    </location>
</feature>
<feature type="helix" evidence="26">
    <location>
        <begin position="30"/>
        <end position="46"/>
    </location>
</feature>
<feature type="turn" evidence="25">
    <location>
        <begin position="49"/>
        <end position="51"/>
    </location>
</feature>
<feature type="turn" evidence="27">
    <location>
        <begin position="53"/>
        <end position="56"/>
    </location>
</feature>
<feature type="helix" evidence="26">
    <location>
        <begin position="61"/>
        <end position="67"/>
    </location>
</feature>
<feature type="helix" evidence="24">
    <location>
        <begin position="73"/>
        <end position="75"/>
    </location>
</feature>
<feature type="helix" evidence="26">
    <location>
        <begin position="79"/>
        <end position="85"/>
    </location>
</feature>
<feature type="helix" evidence="26">
    <location>
        <begin position="87"/>
        <end position="104"/>
    </location>
</feature>
<feature type="helix" evidence="26">
    <location>
        <begin position="107"/>
        <end position="110"/>
    </location>
</feature>
<feature type="strand" evidence="26">
    <location>
        <begin position="111"/>
        <end position="113"/>
    </location>
</feature>
<feature type="strand" evidence="28">
    <location>
        <begin position="117"/>
        <end position="119"/>
    </location>
</feature>
<feature type="helix" evidence="26">
    <location>
        <begin position="120"/>
        <end position="135"/>
    </location>
</feature>
<feature type="strand" evidence="25">
    <location>
        <begin position="136"/>
        <end position="138"/>
    </location>
</feature>
<feature type="helix" evidence="26">
    <location>
        <begin position="155"/>
        <end position="186"/>
    </location>
</feature>
<feature type="turn" evidence="28">
    <location>
        <begin position="187"/>
        <end position="189"/>
    </location>
</feature>
<reference key="1">
    <citation type="journal article" date="2000" name="Immunity">
        <title>Novel p19 protein engages IL-12p40 to form a cytokine, IL-23, with biological activities similar as well as distinct from IL-12.</title>
        <authorList>
            <person name="Oppmann B."/>
            <person name="Lesley R."/>
            <person name="Blom B."/>
            <person name="Timans J.C."/>
            <person name="Xu Y."/>
            <person name="Hunte B."/>
            <person name="Vega F."/>
            <person name="Yu N."/>
            <person name="Wang J."/>
            <person name="Singh K.P."/>
            <person name="Zonin F."/>
            <person name="Vaisberg E."/>
            <person name="Churakova T."/>
            <person name="Liu M.-R."/>
            <person name="Gorman D."/>
            <person name="Wagner J."/>
            <person name="Zurawski S."/>
            <person name="Liu Y.-J."/>
            <person name="Abrams J.S."/>
            <person name="Moore K.W."/>
            <person name="Rennick D.M."/>
            <person name="de Waal-Malefyt R."/>
            <person name="Hannum C."/>
            <person name="Bazan J.F."/>
            <person name="Kastelein R.A."/>
        </authorList>
    </citation>
    <scope>NUCLEOTIDE SEQUENCE [MRNA]</scope>
    <scope>FUNCTION</scope>
    <scope>INTERACTION WITH IL12B</scope>
    <scope>SUBCELLULAR LOCATION</scope>
    <scope>TISSUE SPECIFICITY</scope>
</reference>
<reference key="2">
    <citation type="submission" date="1999-07" db="EMBL/GenBank/DDBJ databases">
        <title>SGRF; a novel member of the IL-6/G-CSF family.</title>
        <authorList>
            <person name="Hirata Y."/>
            <person name="Kosuge Y."/>
        </authorList>
    </citation>
    <scope>NUCLEOTIDE SEQUENCE [GENOMIC DNA / MRNA]</scope>
    <source>
        <tissue>Spleen</tissue>
    </source>
</reference>
<reference key="3">
    <citation type="journal article" date="2003" name="Genome Res.">
        <title>The secreted protein discovery initiative (SPDI), a large-scale effort to identify novel human secreted and transmembrane proteins: a bioinformatics assessment.</title>
        <authorList>
            <person name="Clark H.F."/>
            <person name="Gurney A.L."/>
            <person name="Abaya E."/>
            <person name="Baker K."/>
            <person name="Baldwin D.T."/>
            <person name="Brush J."/>
            <person name="Chen J."/>
            <person name="Chow B."/>
            <person name="Chui C."/>
            <person name="Crowley C."/>
            <person name="Currell B."/>
            <person name="Deuel B."/>
            <person name="Dowd P."/>
            <person name="Eaton D."/>
            <person name="Foster J.S."/>
            <person name="Grimaldi C."/>
            <person name="Gu Q."/>
            <person name="Hass P.E."/>
            <person name="Heldens S."/>
            <person name="Huang A."/>
            <person name="Kim H.S."/>
            <person name="Klimowski L."/>
            <person name="Jin Y."/>
            <person name="Johnson S."/>
            <person name="Lee J."/>
            <person name="Lewis L."/>
            <person name="Liao D."/>
            <person name="Mark M.R."/>
            <person name="Robbie E."/>
            <person name="Sanchez C."/>
            <person name="Schoenfeld J."/>
            <person name="Seshagiri S."/>
            <person name="Simmons L."/>
            <person name="Singh J."/>
            <person name="Smith V."/>
            <person name="Stinson J."/>
            <person name="Vagts A."/>
            <person name="Vandlen R.L."/>
            <person name="Watanabe C."/>
            <person name="Wieand D."/>
            <person name="Woods K."/>
            <person name="Xie M.-H."/>
            <person name="Yansura D.G."/>
            <person name="Yi S."/>
            <person name="Yu G."/>
            <person name="Yuan J."/>
            <person name="Zhang M."/>
            <person name="Zhang Z."/>
            <person name="Goddard A.D."/>
            <person name="Wood W.I."/>
            <person name="Godowski P.J."/>
            <person name="Gray A.M."/>
        </authorList>
    </citation>
    <scope>NUCLEOTIDE SEQUENCE [LARGE SCALE MRNA]</scope>
</reference>
<reference key="4">
    <citation type="journal article" date="2004" name="Genome Res.">
        <title>The status, quality, and expansion of the NIH full-length cDNA project: the Mammalian Gene Collection (MGC).</title>
        <authorList>
            <consortium name="The MGC Project Team"/>
        </authorList>
    </citation>
    <scope>NUCLEOTIDE SEQUENCE [LARGE SCALE MRNA]</scope>
</reference>
<reference key="5">
    <citation type="journal article" date="2002" name="J. Immunol.">
        <title>A receptor for the heterodimeric cytokine IL-23 is composed of IL-12Rbeta1 and a novel cytokine receptor subunit, IL-23R.</title>
        <authorList>
            <person name="Parham C."/>
            <person name="Chirica M."/>
            <person name="Timans J."/>
            <person name="Vaisberg E."/>
            <person name="Travis M."/>
            <person name="Cheung J."/>
            <person name="Pflanz S."/>
            <person name="Zhang R."/>
            <person name="Singh K.P."/>
            <person name="Vega F."/>
            <person name="To W."/>
            <person name="Wagner J."/>
            <person name="O'Farrell A.-M."/>
            <person name="McClanahan T.K."/>
            <person name="Zurawski S."/>
            <person name="Hannum C."/>
            <person name="Gorman D."/>
            <person name="Rennick D.M."/>
            <person name="Kastelein R.A."/>
            <person name="de Waal Malefyt R."/>
            <person name="Moore K.W."/>
        </authorList>
    </citation>
    <scope>FUNCTION</scope>
    <scope>INTERACTION WITH IL12RB1 AND IL23R</scope>
</reference>
<reference key="6">
    <citation type="journal article" date="2002" name="J. Immunol.">
        <title>Regulation of virus-induced IL-12 and IL-23 expression in human macrophages.</title>
        <authorList>
            <person name="Pirhonen J."/>
            <person name="Matikainen S."/>
            <person name="Julkunen I."/>
        </authorList>
    </citation>
    <scope>INDUCTION</scope>
</reference>
<reference key="7">
    <citation type="journal article" date="2004" name="Eur. J. Immunol.">
        <title>Commensal Gram-negative bacteria prime human dendritic cells for enhanced IL-23 and IL-27 expression and enhanced Th1 development.</title>
        <authorList>
            <person name="Smits H.H."/>
            <person name="van Beelen A.J."/>
            <person name="Hessle C."/>
            <person name="Westland R."/>
            <person name="de Jong E."/>
            <person name="Soeteman E."/>
            <person name="Wold A."/>
            <person name="Wierenga E.A."/>
            <person name="Kapsenberg M.L."/>
        </authorList>
    </citation>
    <scope>INDUCTION</scope>
</reference>
<reference key="8">
    <citation type="journal article" date="2005" name="Blood">
        <title>Extracellular nucleotide signaling by P2 receptors inhibits IL-12 and enhances IL-23 expression in human dendritic cells: a novel role for the cAMP pathway.</title>
        <authorList>
            <person name="Schnurr M."/>
            <person name="Toy T."/>
            <person name="Shin A."/>
            <person name="Wagner M."/>
            <person name="Cebon J."/>
            <person name="Maraskovsky E."/>
        </authorList>
    </citation>
    <scope>INDUCTION</scope>
</reference>
<reference key="9">
    <citation type="journal article" date="2005" name="Infect. Immun.">
        <title>Bordetella pertussis-infected human monocyte-derived dendritic cells undergo maturation and induce Th1 polarization and interleukin-23 expression.</title>
        <authorList>
            <person name="Fedele G."/>
            <person name="Stefanelli P."/>
            <person name="Spensieri F."/>
            <person name="Fazio C."/>
            <person name="Mastrantonio P."/>
            <person name="Ausiello C.M."/>
        </authorList>
    </citation>
    <scope>INDUCTION</scope>
</reference>
<reference key="10">
    <citation type="journal article" date="2006" name="Eur. J. Immunol.">
        <title>Preferential production of the IL-12(p40)/IL-23(p19) heterodimer by dendritic cells from human newborns.</title>
        <authorList>
            <person name="Vanden Eijnden S."/>
            <person name="Goriely S."/>
            <person name="De Wit D."/>
            <person name="Goldman M."/>
            <person name="Willems F."/>
        </authorList>
    </citation>
    <scope>DEVELOPMENTAL STAGE</scope>
</reference>
<reference key="11">
    <citation type="journal article" date="2006" name="J. Immunol.">
        <title>In vitro and in situ expression of IL-23 by keratinocytes in healthy skin and psoriasis lesions: enhanced expression in psoriatic skin.</title>
        <authorList>
            <person name="Piskin G."/>
            <person name="Sylva-Steenland R.M.R."/>
            <person name="Bos J.D."/>
            <person name="Teunissen M.B.M."/>
        </authorList>
    </citation>
    <scope>FUNCTION</scope>
    <scope>INDUCTION</scope>
    <scope>TISSUE SPECIFICITY</scope>
</reference>
<reference key="12">
    <citation type="journal article" date="2006" name="J. Immunol.">
        <title>IL-23 is increased in dendritic cells in multiple sclerosis and down-regulation of IL-23 by antisense oligos increases dendritic cell IL-10 production.</title>
        <authorList>
            <person name="Vaknin-Dembinsky A."/>
            <person name="Balashov K."/>
            <person name="Weiner H.L."/>
        </authorList>
    </citation>
    <scope>INDUCTION</scope>
</reference>
<reference key="13">
    <citation type="journal article" date="2006" name="Nature">
        <title>IL-23 promotes tumour incidence and growth.</title>
        <authorList>
            <person name="Langowski J.L."/>
            <person name="Zhang X."/>
            <person name="Wu L."/>
            <person name="Mattson J.D."/>
            <person name="Chen T."/>
            <person name="Smith K."/>
            <person name="Basham B."/>
            <person name="McClanahan T.K."/>
            <person name="Kastelein R.A."/>
            <person name="Oft M."/>
        </authorList>
    </citation>
    <scope>INDUCTION</scope>
</reference>
<reference key="14">
    <citation type="journal article" date="2007" name="Nat. Immunol.">
        <title>Development, cytokine profile and function of human interleukin 17-producing helper T cells.</title>
        <authorList>
            <person name="Wilson N.J."/>
            <person name="Boniface K."/>
            <person name="Chan J.R."/>
            <person name="McKenzie B.S."/>
            <person name="Blumenschein W.M."/>
            <person name="Mattson J.D."/>
            <person name="Basham B."/>
            <person name="Smith K."/>
            <person name="Chen T."/>
            <person name="Morel F."/>
            <person name="Lecron J.C."/>
            <person name="Kastelein R.A."/>
            <person name="Cua D.J."/>
            <person name="McClanahan T.K."/>
            <person name="Bowman E.P."/>
            <person name="de Waal Malefyt R."/>
        </authorList>
    </citation>
    <scope>FUNCTION</scope>
</reference>
<reference key="15">
    <citation type="journal article" date="2020" name="Cell. Mol. Gastroenterol. Hepatol.">
        <title>IL23 Promotes Antimicrobial Pathways in Human Macrophages, Which Are Reduced With the IBD-Protective IL23R R381Q Variant.</title>
        <authorList>
            <person name="Sun R."/>
            <person name="Abraham C."/>
        </authorList>
    </citation>
    <scope>FUNCTION IN BACTERIAL CLEARANCE</scope>
</reference>
<reference key="16">
    <citation type="journal article" date="2008" name="J. Mol. Biol.">
        <title>The structure of interleukin-23 reveals the molecular basis of p40 subunit sharing with interleukin-12.</title>
        <authorList>
            <person name="Lupardus P.J."/>
            <person name="Garcia K.C."/>
        </authorList>
    </citation>
    <scope>X-RAY CRYSTALLOGRAPHY (2.3 ANGSTROMS) OF 20-189 IN COMPLEX WITH IL12B</scope>
    <scope>SUBUNIT</scope>
</reference>
<reference evidence="19 20 21" key="17">
    <citation type="journal article" date="2018" name="Immunity">
        <title>Structural Activation of Pro-inflammatory Human Cytokine IL-23 by Cognate IL-23 Receptor Enables Recruitment of the Shared Receptor IL-12Rbeta1.</title>
        <authorList>
            <person name="Bloch Y."/>
            <person name="Bouchareychas L."/>
            <person name="Merceron R."/>
            <person name="Skladanowska K."/>
            <person name="Van den Bossche L."/>
            <person name="Detry S."/>
            <person name="Govindarajan S."/>
            <person name="Elewaut D."/>
            <person name="Haerynck F."/>
            <person name="Dullaers M."/>
            <person name="Adamopoulos I.E."/>
            <person name="Savvides S.N."/>
        </authorList>
    </citation>
    <scope>X-RAY CRYSTALLOGRAPHY (2.50 ANGSTROMS) IN COMPLEX WITH IL23R</scope>
    <scope>DISULFIDE BOND</scope>
    <scope>FUNCTION</scope>
</reference>
<reference evidence="22" key="18">
    <citation type="journal article" date="2020" name="PLoS ONE">
        <title>Integration of phage and yeast display platforms: A reliable and cost effective approach for binning of peptides as displayed on-phage.</title>
        <authorList>
            <person name="Pandya P."/>
            <person name="Sayers R.O."/>
            <person name="Ting J.P."/>
            <person name="Morshedian S."/>
            <person name="Torres C."/>
            <person name="Cudal J.S."/>
            <person name="Zhang K."/>
            <person name="Fitchett J.R."/>
            <person name="Zhang Q."/>
            <person name="Zhang F.F."/>
            <person name="Wang J."/>
            <person name="Durbin J.D."/>
            <person name="Carrillo J.J."/>
            <person name="Espada A."/>
            <person name="Broughton H."/>
            <person name="Qian Y."/>
            <person name="Afshar S."/>
        </authorList>
    </citation>
    <scope>X-RAY CRYSTALLOGRAPHY (2.74 ANGSTROMS) OF 20-189</scope>
    <scope>DISULFIDE BOND</scope>
</reference>
<reference evidence="23" key="19">
    <citation type="journal article" date="2021" name="Cell">
        <title>Structural basis for IL-12 and IL-23 receptor sharing reveals a gateway for shaping actions on T versus NK cells.</title>
        <authorList>
            <person name="Glassman C.R."/>
            <person name="Mathiharan Y.K."/>
            <person name="Jude K.M."/>
            <person name="Su L."/>
            <person name="Panova O."/>
            <person name="Lupardus P.J."/>
            <person name="Spangler J.B."/>
            <person name="Ely L.K."/>
            <person name="Thomas C."/>
            <person name="Skiniotis G."/>
            <person name="Garcia K.C."/>
        </authorList>
    </citation>
    <scope>X-RAY CRYSTALLOGRAPHY (3.40 ANGSTROMS) OF 28-189 IN COMPLEX WITH IL23R AND IL12RB1</scope>
    <scope>DISULFIDE BOND</scope>
    <scope>FUNCTION</scope>
</reference>